<proteinExistence type="inferred from homology"/>
<gene>
    <name type="ordered locus">BCQ_1243</name>
</gene>
<accession>B9ITX7</accession>
<sequence length="248" mass="30098">MLYLHDVWVNWFEGEENGYNVCHFYEWRKDDTIELLDQVPLLKVDSTLYHYIENELLELPQKMLEDVHHKAYIRKNHERLQQEYCFVVTDGKGIIAIDTIGYNVPIRKSRLIPRQEQMVYEMVENVQAEKYEFQVEEMEKEHHILSPSPFIMNGLTRKERQLKQLLFMALDQLHTTKNTAEIRYWFTEWDPSAYGMVQHMEFEDIWAKLYEEAKTGWSEKHEQLCERLVKGQPFFEKLWEMENEQKVN</sequence>
<name>Y1243_BACCQ</name>
<protein>
    <recommendedName>
        <fullName evidence="1">UPF0736 protein BCQ_1243</fullName>
    </recommendedName>
</protein>
<organism>
    <name type="scientific">Bacillus cereus (strain Q1)</name>
    <dbReference type="NCBI Taxonomy" id="361100"/>
    <lineage>
        <taxon>Bacteria</taxon>
        <taxon>Bacillati</taxon>
        <taxon>Bacillota</taxon>
        <taxon>Bacilli</taxon>
        <taxon>Bacillales</taxon>
        <taxon>Bacillaceae</taxon>
        <taxon>Bacillus</taxon>
        <taxon>Bacillus cereus group</taxon>
    </lineage>
</organism>
<dbReference type="EMBL" id="CP000227">
    <property type="protein sequence ID" value="ACM11673.1"/>
    <property type="molecule type" value="Genomic_DNA"/>
</dbReference>
<dbReference type="SMR" id="B9ITX7"/>
<dbReference type="KEGG" id="bcq:BCQ_1243"/>
<dbReference type="HOGENOM" id="CLU_1101152_0_0_9"/>
<dbReference type="Proteomes" id="UP000000441">
    <property type="component" value="Chromosome"/>
</dbReference>
<dbReference type="HAMAP" id="MF_01860">
    <property type="entry name" value="UPF0736"/>
    <property type="match status" value="1"/>
</dbReference>
<dbReference type="InterPro" id="IPR020909">
    <property type="entry name" value="UPF0736"/>
</dbReference>
<dbReference type="Pfam" id="PF12227">
    <property type="entry name" value="DUF3603"/>
    <property type="match status" value="1"/>
</dbReference>
<evidence type="ECO:0000255" key="1">
    <source>
        <dbReference type="HAMAP-Rule" id="MF_01860"/>
    </source>
</evidence>
<comment type="similarity">
    <text evidence="1">Belongs to the UPF0736 family.</text>
</comment>
<reference key="1">
    <citation type="journal article" date="2009" name="J. Bacteriol.">
        <title>Complete genome sequence of the extremophilic Bacillus cereus strain Q1 with industrial applications.</title>
        <authorList>
            <person name="Xiong Z."/>
            <person name="Jiang Y."/>
            <person name="Qi D."/>
            <person name="Lu H."/>
            <person name="Yang F."/>
            <person name="Yang J."/>
            <person name="Chen L."/>
            <person name="Sun L."/>
            <person name="Xu X."/>
            <person name="Xue Y."/>
            <person name="Zhu Y."/>
            <person name="Jin Q."/>
        </authorList>
    </citation>
    <scope>NUCLEOTIDE SEQUENCE [LARGE SCALE GENOMIC DNA]</scope>
    <source>
        <strain>Q1</strain>
    </source>
</reference>
<feature type="chain" id="PRO_1000188705" description="UPF0736 protein BCQ_1243">
    <location>
        <begin position="1"/>
        <end position="248"/>
    </location>
</feature>